<sequence>MRLTAKQITWLKVCLHLAGFLPLLWLFWAINHGGLSADPVKDIQHFTGRTALKFLLATLLVSPLARYAKQPLLIRTRRLLGLWCFVWATLHLTSYALLELGIHNLALLGSELISRPYLTLGIISWLVLLALTLTSTQFAQRKLGKRWQTLHNVVYLVAILAPIHYLWSVKILSPQPVIYAALALALLALRYRKFRQWWR</sequence>
<evidence type="ECO:0000255" key="1">
    <source>
        <dbReference type="HAMAP-Rule" id="MF_01207"/>
    </source>
</evidence>
<gene>
    <name evidence="1" type="primary">msrQ</name>
    <name type="ordered locus">STM3378</name>
</gene>
<accession>Q8ZLP1</accession>
<reference key="1">
    <citation type="journal article" date="2001" name="Nature">
        <title>Complete genome sequence of Salmonella enterica serovar Typhimurium LT2.</title>
        <authorList>
            <person name="McClelland M."/>
            <person name="Sanderson K.E."/>
            <person name="Spieth J."/>
            <person name="Clifton S.W."/>
            <person name="Latreille P."/>
            <person name="Courtney L."/>
            <person name="Porwollik S."/>
            <person name="Ali J."/>
            <person name="Dante M."/>
            <person name="Du F."/>
            <person name="Hou S."/>
            <person name="Layman D."/>
            <person name="Leonard S."/>
            <person name="Nguyen C."/>
            <person name="Scott K."/>
            <person name="Holmes A."/>
            <person name="Grewal N."/>
            <person name="Mulvaney E."/>
            <person name="Ryan E."/>
            <person name="Sun H."/>
            <person name="Florea L."/>
            <person name="Miller W."/>
            <person name="Stoneking T."/>
            <person name="Nhan M."/>
            <person name="Waterston R."/>
            <person name="Wilson R.K."/>
        </authorList>
    </citation>
    <scope>NUCLEOTIDE SEQUENCE [LARGE SCALE GENOMIC DNA]</scope>
    <source>
        <strain>LT2 / SGSC1412 / ATCC 700720</strain>
    </source>
</reference>
<feature type="chain" id="PRO_0000091584" description="Protein-methionine-sulfoxide reductase heme-binding subunit MsrQ">
    <location>
        <begin position="1"/>
        <end position="199"/>
    </location>
</feature>
<feature type="transmembrane region" description="Helical" evidence="1">
    <location>
        <begin position="10"/>
        <end position="30"/>
    </location>
</feature>
<feature type="transmembrane region" description="Helical" evidence="1">
    <location>
        <begin position="82"/>
        <end position="102"/>
    </location>
</feature>
<feature type="transmembrane region" description="Helical" evidence="1">
    <location>
        <begin position="116"/>
        <end position="136"/>
    </location>
</feature>
<feature type="transmembrane region" description="Helical" evidence="1">
    <location>
        <begin position="153"/>
        <end position="173"/>
    </location>
</feature>
<dbReference type="EMBL" id="AE006468">
    <property type="protein sequence ID" value="AAL22247.1"/>
    <property type="molecule type" value="Genomic_DNA"/>
</dbReference>
<dbReference type="RefSeq" id="NP_462288.1">
    <property type="nucleotide sequence ID" value="NC_003197.2"/>
</dbReference>
<dbReference type="RefSeq" id="WP_001240053.1">
    <property type="nucleotide sequence ID" value="NC_003197.2"/>
</dbReference>
<dbReference type="SMR" id="Q8ZLP1"/>
<dbReference type="STRING" id="99287.STM3378"/>
<dbReference type="PaxDb" id="99287-STM3378"/>
<dbReference type="GeneID" id="1254901"/>
<dbReference type="KEGG" id="stm:STM3378"/>
<dbReference type="PATRIC" id="fig|99287.12.peg.3579"/>
<dbReference type="HOGENOM" id="CLU_080662_1_0_6"/>
<dbReference type="OMA" id="LHFFWMR"/>
<dbReference type="PhylomeDB" id="Q8ZLP1"/>
<dbReference type="BioCyc" id="SENT99287:STM3378-MONOMER"/>
<dbReference type="Proteomes" id="UP000001014">
    <property type="component" value="Chromosome"/>
</dbReference>
<dbReference type="GO" id="GO:0005886">
    <property type="term" value="C:plasma membrane"/>
    <property type="evidence" value="ECO:0000318"/>
    <property type="project" value="GO_Central"/>
</dbReference>
<dbReference type="GO" id="GO:0009055">
    <property type="term" value="F:electron transfer activity"/>
    <property type="evidence" value="ECO:0007669"/>
    <property type="project" value="UniProtKB-UniRule"/>
</dbReference>
<dbReference type="GO" id="GO:0010181">
    <property type="term" value="F:FMN binding"/>
    <property type="evidence" value="ECO:0000318"/>
    <property type="project" value="GO_Central"/>
</dbReference>
<dbReference type="GO" id="GO:0020037">
    <property type="term" value="F:heme binding"/>
    <property type="evidence" value="ECO:0000318"/>
    <property type="project" value="GO_Central"/>
</dbReference>
<dbReference type="GO" id="GO:0046872">
    <property type="term" value="F:metal ion binding"/>
    <property type="evidence" value="ECO:0007669"/>
    <property type="project" value="UniProtKB-KW"/>
</dbReference>
<dbReference type="GO" id="GO:0016679">
    <property type="term" value="F:oxidoreductase activity, acting on diphenols and related substances as donors"/>
    <property type="evidence" value="ECO:0000318"/>
    <property type="project" value="GO_Central"/>
</dbReference>
<dbReference type="GO" id="GO:0030091">
    <property type="term" value="P:protein repair"/>
    <property type="evidence" value="ECO:0007669"/>
    <property type="project" value="UniProtKB-UniRule"/>
</dbReference>
<dbReference type="HAMAP" id="MF_01207">
    <property type="entry name" value="MsrQ"/>
    <property type="match status" value="1"/>
</dbReference>
<dbReference type="InterPro" id="IPR013130">
    <property type="entry name" value="Fe3_Rdtase_TM_dom"/>
</dbReference>
<dbReference type="InterPro" id="IPR022837">
    <property type="entry name" value="MsrQ-like"/>
</dbReference>
<dbReference type="NCBIfam" id="NF003831">
    <property type="entry name" value="PRK05419.1-2"/>
    <property type="match status" value="1"/>
</dbReference>
<dbReference type="NCBIfam" id="NF003832">
    <property type="entry name" value="PRK05419.1-4"/>
    <property type="match status" value="1"/>
</dbReference>
<dbReference type="PANTHER" id="PTHR36964">
    <property type="entry name" value="PROTEIN-METHIONINE-SULFOXIDE REDUCTASE HEME-BINDING SUBUNIT MSRQ"/>
    <property type="match status" value="1"/>
</dbReference>
<dbReference type="PANTHER" id="PTHR36964:SF1">
    <property type="entry name" value="PROTEIN-METHIONINE-SULFOXIDE REDUCTASE HEME-BINDING SUBUNIT MSRQ"/>
    <property type="match status" value="1"/>
</dbReference>
<dbReference type="Pfam" id="PF01794">
    <property type="entry name" value="Ferric_reduct"/>
    <property type="match status" value="1"/>
</dbReference>
<keyword id="KW-0997">Cell inner membrane</keyword>
<keyword id="KW-1003">Cell membrane</keyword>
<keyword id="KW-0249">Electron transport</keyword>
<keyword id="KW-0285">Flavoprotein</keyword>
<keyword id="KW-0288">FMN</keyword>
<keyword id="KW-0349">Heme</keyword>
<keyword id="KW-0408">Iron</keyword>
<keyword id="KW-0472">Membrane</keyword>
<keyword id="KW-0479">Metal-binding</keyword>
<keyword id="KW-1185">Reference proteome</keyword>
<keyword id="KW-0812">Transmembrane</keyword>
<keyword id="KW-1133">Transmembrane helix</keyword>
<keyword id="KW-0813">Transport</keyword>
<comment type="function">
    <text evidence="1">Part of the MsrPQ system that repairs oxidized periplasmic proteins containing methionine sulfoxide residues (Met-O), using respiratory chain electrons. Thus protects these proteins from oxidative-stress damage caused by reactive species of oxygen and chlorine generated by the host defense mechanisms. MsrPQ is essential for the maintenance of envelope integrity under bleach stress, rescuing a wide series of structurally unrelated periplasmic proteins from methionine oxidation, including the primary periplasmic chaperone SurA and the lipoprotein Pal. MsrQ provides electrons for reduction to the reductase catalytic subunit MsrP, using the quinone pool of the respiratory chain.</text>
</comment>
<comment type="cofactor">
    <cofactor evidence="1">
        <name>FMN</name>
        <dbReference type="ChEBI" id="CHEBI:58210"/>
    </cofactor>
    <text evidence="1">Binds 1 FMN per subunit.</text>
</comment>
<comment type="cofactor">
    <cofactor evidence="1">
        <name>heme b</name>
        <dbReference type="ChEBI" id="CHEBI:60344"/>
    </cofactor>
    <text evidence="1">Binds 1 heme b (iron(II)-protoporphyrin IX) group per subunit.</text>
</comment>
<comment type="subunit">
    <text evidence="1">Heterodimer of a catalytic subunit (MsrP) and a heme-binding subunit (MsrQ).</text>
</comment>
<comment type="subcellular location">
    <subcellularLocation>
        <location evidence="1">Cell inner membrane</location>
        <topology evidence="1">Multi-pass membrane protein</topology>
    </subcellularLocation>
</comment>
<comment type="similarity">
    <text evidence="1">Belongs to the MsrQ family.</text>
</comment>
<protein>
    <recommendedName>
        <fullName evidence="1">Protein-methionine-sulfoxide reductase heme-binding subunit MsrQ</fullName>
    </recommendedName>
    <alternativeName>
        <fullName evidence="1">Flavocytochrome MsrQ</fullName>
    </alternativeName>
</protein>
<organism>
    <name type="scientific">Salmonella typhimurium (strain LT2 / SGSC1412 / ATCC 700720)</name>
    <dbReference type="NCBI Taxonomy" id="99287"/>
    <lineage>
        <taxon>Bacteria</taxon>
        <taxon>Pseudomonadati</taxon>
        <taxon>Pseudomonadota</taxon>
        <taxon>Gammaproteobacteria</taxon>
        <taxon>Enterobacterales</taxon>
        <taxon>Enterobacteriaceae</taxon>
        <taxon>Salmonella</taxon>
    </lineage>
</organism>
<name>MSRQ_SALTY</name>
<proteinExistence type="inferred from homology"/>